<proteinExistence type="inferred from homology"/>
<comment type="function">
    <text evidence="1 4">Lipase which is essential for lysis of subvacuolar cytoplasm to vacuole targeted bodies and intravacuolar autophagic bodies. Involved in the lysis of intravacuolar multivesicular body (MVB) vesicles. The intravacuolar membrane disintegration by atg15 is critical to life span extension (By similarity).</text>
</comment>
<comment type="catalytic activity">
    <reaction>
        <text>a triacylglycerol + H2O = a diacylglycerol + a fatty acid + H(+)</text>
        <dbReference type="Rhea" id="RHEA:12044"/>
        <dbReference type="ChEBI" id="CHEBI:15377"/>
        <dbReference type="ChEBI" id="CHEBI:15378"/>
        <dbReference type="ChEBI" id="CHEBI:17855"/>
        <dbReference type="ChEBI" id="CHEBI:18035"/>
        <dbReference type="ChEBI" id="CHEBI:28868"/>
        <dbReference type="EC" id="3.1.1.3"/>
    </reaction>
</comment>
<comment type="subunit">
    <text evidence="1">Binds to both phosphatidylinositol (PI) and phosphatidylinositol 3,5-bisphosphate (PIP2).</text>
</comment>
<comment type="subcellular location">
    <subcellularLocation>
        <location evidence="2">Endosome</location>
        <location evidence="2">Multivesicular body membrane</location>
        <topology evidence="2">Single-pass type II membrane protein</topology>
    </subcellularLocation>
    <subcellularLocation>
        <location evidence="2">Prevacuolar compartment membrane</location>
        <topology evidence="2">Single-pass type II membrane protein</topology>
    </subcellularLocation>
    <text evidence="2">From ER, targeted to vacuolar lumen at the MVB vesicles via the Golgi and the prevacuolar compartment (PVC).</text>
</comment>
<comment type="similarity">
    <text evidence="5">Belongs to the AB hydrolase superfamily. Lipase family.</text>
</comment>
<reference key="1">
    <citation type="journal article" date="2007" name="Autophagy">
        <title>ATG genes involved in non-selective autophagy are conserved from yeast to man, but the selective Cvt and pexophagy pathways also require organism-specific genes.</title>
        <authorList>
            <person name="Meijer W.H."/>
            <person name="van der Klei I.J."/>
            <person name="Veenhuis M."/>
            <person name="Kiel J.A.K.W."/>
        </authorList>
    </citation>
    <scope>NUCLEOTIDE SEQUENCE [GENOMIC DNA]</scope>
    <scope>FUNCTION</scope>
</reference>
<reference key="2">
    <citation type="journal article" date="2008" name="Nat. Biotechnol.">
        <title>Genome sequencing and analysis of the filamentous fungus Penicillium chrysogenum.</title>
        <authorList>
            <person name="van den Berg M.A."/>
            <person name="Albang R."/>
            <person name="Albermann K."/>
            <person name="Badger J.H."/>
            <person name="Daran J.-M."/>
            <person name="Driessen A.J.M."/>
            <person name="Garcia-Estrada C."/>
            <person name="Fedorova N.D."/>
            <person name="Harris D.M."/>
            <person name="Heijne W.H.M."/>
            <person name="Joardar V.S."/>
            <person name="Kiel J.A.K.W."/>
            <person name="Kovalchuk A."/>
            <person name="Martin J.F."/>
            <person name="Nierman W.C."/>
            <person name="Nijland J.G."/>
            <person name="Pronk J.T."/>
            <person name="Roubos J.A."/>
            <person name="van der Klei I.J."/>
            <person name="van Peij N.N.M.E."/>
            <person name="Veenhuis M."/>
            <person name="von Doehren H."/>
            <person name="Wagner C."/>
            <person name="Wortman J.R."/>
            <person name="Bovenberg R.A.L."/>
        </authorList>
    </citation>
    <scope>NUCLEOTIDE SEQUENCE [LARGE SCALE GENOMIC DNA]</scope>
    <source>
        <strain>ATCC 28089 / DSM 1075 / NRRL 1951 / Wisconsin 54-1255</strain>
    </source>
</reference>
<accession>A7KAM5</accession>
<accession>B6HSF9</accession>
<protein>
    <recommendedName>
        <fullName>Putative lipase atg15</fullName>
        <ecNumber>3.1.1.3</ecNumber>
    </recommendedName>
    <alternativeName>
        <fullName>Autophagy-related protein 15</fullName>
    </alternativeName>
</protein>
<organism>
    <name type="scientific">Penicillium rubens (strain ATCC 28089 / DSM 1075 / NRRL 1951 / Wisconsin 54-1255)</name>
    <name type="common">Penicillium chrysogenum</name>
    <dbReference type="NCBI Taxonomy" id="500485"/>
    <lineage>
        <taxon>Eukaryota</taxon>
        <taxon>Fungi</taxon>
        <taxon>Dikarya</taxon>
        <taxon>Ascomycota</taxon>
        <taxon>Pezizomycotina</taxon>
        <taxon>Eurotiomycetes</taxon>
        <taxon>Eurotiomycetidae</taxon>
        <taxon>Eurotiales</taxon>
        <taxon>Aspergillaceae</taxon>
        <taxon>Penicillium</taxon>
        <taxon>Penicillium chrysogenum species complex</taxon>
    </lineage>
</organism>
<feature type="chain" id="PRO_0000317967" description="Putative lipase atg15">
    <location>
        <begin position="1"/>
        <end position="673"/>
    </location>
</feature>
<feature type="topological domain" description="Cytoplasmic" evidence="1">
    <location>
        <begin position="1"/>
        <end position="7"/>
    </location>
</feature>
<feature type="transmembrane region" description="Helical; Signal-anchor for type II membrane protein">
    <location>
        <begin position="8"/>
        <end position="28"/>
    </location>
</feature>
<feature type="topological domain" description="Lumenal" evidence="1">
    <location>
        <begin position="29"/>
        <end position="673"/>
    </location>
</feature>
<feature type="active site" description="Charge relay system" evidence="1">
    <location>
        <position position="311"/>
    </location>
</feature>
<feature type="glycosylation site" description="N-linked (GlcNAc...) asparagine" evidence="3">
    <location>
        <position position="156"/>
    </location>
</feature>
<feature type="glycosylation site" description="N-linked (GlcNAc...) asparagine" evidence="3">
    <location>
        <position position="191"/>
    </location>
</feature>
<feature type="glycosylation site" description="N-linked (GlcNAc...) asparagine" evidence="3">
    <location>
        <position position="213"/>
    </location>
</feature>
<feature type="glycosylation site" description="N-linked (GlcNAc...) asparagine" evidence="3">
    <location>
        <position position="271"/>
    </location>
</feature>
<feature type="glycosylation site" description="N-linked (GlcNAc...) asparagine" evidence="3">
    <location>
        <position position="295"/>
    </location>
</feature>
<feature type="glycosylation site" description="N-linked (GlcNAc...) asparagine" evidence="3">
    <location>
        <position position="457"/>
    </location>
</feature>
<sequence>MPRKRSRFELSIHSLLLSVAVLSGAAYASGYYPPSQQVPIIPPQVPLKGAEATPDIHEFSLRHIFHRGTYEQPDFHARLDVKPDTRLRTVSEDGHEEEYIASESSLLASSSPLTIQRLADRRLPVIQGHLAAARSSGFAAALSPQEWALDTLPGPNITDKPTVLTFAQMTANDYIEEPGTGQWHTINGKFNYSGSFGWQKDGLRGHIYSDKTNGTVVISLKGTSPALFDGAGTTTNDKVNDNLYFSCCCGQGGSYLWRQSCDCQSATFTANLTCIIESMTDEDRYYRAAIDLYSNVTEIYPDANIWMTGHSLGGAMTSLVGLTFGLPVVTFEAVPEALPAARLGLPSPPGYDPRFPQSRQYTGAYHFGHTADPVFMGTCNGINSICTWGGYAMESVCHTGQVCTYDTVADKGWRVGLGTHKIENVISDVLMTYDSVPSCVAEEECFDCELWKFFRSNGSEITTTTTTTTTTTSPTRTSTCKTPGWWGCLDESTTATTTTTTTTTSTATTTTCMTPGWFGCNDPTTTTATPAPTVTTTLPTVTSTTTSCHDPGWFGCRDETSTVATTTANPASPTSTACHSPGIFWGCWDEPTSTTAVTSLPAFTSAPISTTCHSPGIFWGCWDEPTSTTAVTSLPAITSTPISTTCHIPGIFWGCWDEPTNTPAVTSAPTPTS</sequence>
<name>ATG15_PENRW</name>
<keyword id="KW-0072">Autophagy</keyword>
<keyword id="KW-0967">Endosome</keyword>
<keyword id="KW-0325">Glycoprotein</keyword>
<keyword id="KW-0378">Hydrolase</keyword>
<keyword id="KW-0442">Lipid degradation</keyword>
<keyword id="KW-0443">Lipid metabolism</keyword>
<keyword id="KW-0472">Membrane</keyword>
<keyword id="KW-1185">Reference proteome</keyword>
<keyword id="KW-0735">Signal-anchor</keyword>
<keyword id="KW-0812">Transmembrane</keyword>
<keyword id="KW-1133">Transmembrane helix</keyword>
<evidence type="ECO:0000250" key="1"/>
<evidence type="ECO:0000250" key="2">
    <source>
        <dbReference type="UniProtKB" id="P25641"/>
    </source>
</evidence>
<evidence type="ECO:0000255" key="3"/>
<evidence type="ECO:0000269" key="4">
    <source>
    </source>
</evidence>
<evidence type="ECO:0000305" key="5"/>
<dbReference type="EC" id="3.1.1.3"/>
<dbReference type="EMBL" id="EF107747">
    <property type="protein sequence ID" value="ABO31085.1"/>
    <property type="molecule type" value="Genomic_DNA"/>
</dbReference>
<dbReference type="EMBL" id="AM920437">
    <property type="protein sequence ID" value="CAP99411.1"/>
    <property type="molecule type" value="Genomic_DNA"/>
</dbReference>
<dbReference type="RefSeq" id="XP_002566020.1">
    <property type="nucleotide sequence ID" value="XM_002565974.1"/>
</dbReference>
<dbReference type="STRING" id="500485.A7KAM5"/>
<dbReference type="ESTHER" id="pencw-atg15">
    <property type="family name" value="ATG15-related-lipase"/>
</dbReference>
<dbReference type="GlyCosmos" id="A7KAM5">
    <property type="glycosylation" value="6 sites, No reported glycans"/>
</dbReference>
<dbReference type="GeneID" id="8305265"/>
<dbReference type="KEGG" id="pcs:N7525_004250"/>
<dbReference type="VEuPathDB" id="FungiDB:PCH_Pc22g21230"/>
<dbReference type="eggNOG" id="KOG4540">
    <property type="taxonomic scope" value="Eukaryota"/>
</dbReference>
<dbReference type="HOGENOM" id="CLU_028295_0_1_1"/>
<dbReference type="OMA" id="TYHFGHT"/>
<dbReference type="OrthoDB" id="58570at2759"/>
<dbReference type="BioCyc" id="PCHR:PC22G21230-MONOMER"/>
<dbReference type="Proteomes" id="UP000000724">
    <property type="component" value="Contig Pc00c22"/>
</dbReference>
<dbReference type="GO" id="GO:0032585">
    <property type="term" value="C:multivesicular body membrane"/>
    <property type="evidence" value="ECO:0007669"/>
    <property type="project" value="UniProtKB-SubCell"/>
</dbReference>
<dbReference type="GO" id="GO:0005775">
    <property type="term" value="C:vacuolar lumen"/>
    <property type="evidence" value="ECO:0007669"/>
    <property type="project" value="TreeGrafter"/>
</dbReference>
<dbReference type="GO" id="GO:0004620">
    <property type="term" value="F:phospholipase activity"/>
    <property type="evidence" value="ECO:0007669"/>
    <property type="project" value="TreeGrafter"/>
</dbReference>
<dbReference type="GO" id="GO:0004806">
    <property type="term" value="F:triacylglycerol lipase activity"/>
    <property type="evidence" value="ECO:0007669"/>
    <property type="project" value="UniProtKB-EC"/>
</dbReference>
<dbReference type="GO" id="GO:0017000">
    <property type="term" value="P:antibiotic biosynthetic process"/>
    <property type="evidence" value="ECO:0007669"/>
    <property type="project" value="UniProtKB-ARBA"/>
</dbReference>
<dbReference type="GO" id="GO:0072330">
    <property type="term" value="P:monocarboxylic acid biosynthetic process"/>
    <property type="evidence" value="ECO:0007669"/>
    <property type="project" value="UniProtKB-ARBA"/>
</dbReference>
<dbReference type="GO" id="GO:0034496">
    <property type="term" value="P:multivesicular body membrane disassembly"/>
    <property type="evidence" value="ECO:0007669"/>
    <property type="project" value="TreeGrafter"/>
</dbReference>
<dbReference type="GO" id="GO:0046461">
    <property type="term" value="P:neutral lipid catabolic process"/>
    <property type="evidence" value="ECO:0007669"/>
    <property type="project" value="TreeGrafter"/>
</dbReference>
<dbReference type="GO" id="GO:0006660">
    <property type="term" value="P:phosphatidylserine catabolic process"/>
    <property type="evidence" value="ECO:0007669"/>
    <property type="project" value="TreeGrafter"/>
</dbReference>
<dbReference type="GO" id="GO:0034727">
    <property type="term" value="P:piecemeal microautophagy of the nucleus"/>
    <property type="evidence" value="ECO:0007669"/>
    <property type="project" value="TreeGrafter"/>
</dbReference>
<dbReference type="CDD" id="cd00519">
    <property type="entry name" value="Lipase_3"/>
    <property type="match status" value="1"/>
</dbReference>
<dbReference type="FunFam" id="3.40.50.1820:FF:000129">
    <property type="entry name" value="Autophagy related lipase Atg15, putative"/>
    <property type="match status" value="1"/>
</dbReference>
<dbReference type="Gene3D" id="3.40.50.1820">
    <property type="entry name" value="alpha/beta hydrolase"/>
    <property type="match status" value="1"/>
</dbReference>
<dbReference type="InterPro" id="IPR029058">
    <property type="entry name" value="AB_hydrolase_fold"/>
</dbReference>
<dbReference type="InterPro" id="IPR050805">
    <property type="entry name" value="ATG15_Lipase"/>
</dbReference>
<dbReference type="InterPro" id="IPR002921">
    <property type="entry name" value="Fungal_lipase-type"/>
</dbReference>
<dbReference type="PANTHER" id="PTHR47175">
    <property type="entry name" value="LIPASE ATG15-RELATED"/>
    <property type="match status" value="1"/>
</dbReference>
<dbReference type="PANTHER" id="PTHR47175:SF2">
    <property type="entry name" value="LIPASE ATG15-RELATED"/>
    <property type="match status" value="1"/>
</dbReference>
<dbReference type="Pfam" id="PF01764">
    <property type="entry name" value="Lipase_3"/>
    <property type="match status" value="1"/>
</dbReference>
<dbReference type="SUPFAM" id="SSF53474">
    <property type="entry name" value="alpha/beta-Hydrolases"/>
    <property type="match status" value="1"/>
</dbReference>
<gene>
    <name type="primary">atg15</name>
    <name type="ORF">Pc22g21230</name>
</gene>